<protein>
    <recommendedName>
        <fullName evidence="1">Orotate phosphoribosyltransferase</fullName>
        <shortName evidence="1">OPRT</shortName>
        <shortName evidence="1">OPRTase</shortName>
        <ecNumber evidence="1">2.4.2.10</ecNumber>
    </recommendedName>
</protein>
<dbReference type="EC" id="2.4.2.10" evidence="1"/>
<dbReference type="EMBL" id="CP000903">
    <property type="protein sequence ID" value="ABY44878.1"/>
    <property type="molecule type" value="Genomic_DNA"/>
</dbReference>
<dbReference type="RefSeq" id="WP_012261599.1">
    <property type="nucleotide sequence ID" value="NC_010184.1"/>
</dbReference>
<dbReference type="SMR" id="A9VTC2"/>
<dbReference type="KEGG" id="bwe:BcerKBAB4_3709"/>
<dbReference type="eggNOG" id="COG0461">
    <property type="taxonomic scope" value="Bacteria"/>
</dbReference>
<dbReference type="HOGENOM" id="CLU_074878_1_1_9"/>
<dbReference type="UniPathway" id="UPA00070">
    <property type="reaction ID" value="UER00119"/>
</dbReference>
<dbReference type="Proteomes" id="UP000002154">
    <property type="component" value="Chromosome"/>
</dbReference>
<dbReference type="GO" id="GO:0000287">
    <property type="term" value="F:magnesium ion binding"/>
    <property type="evidence" value="ECO:0007669"/>
    <property type="project" value="UniProtKB-UniRule"/>
</dbReference>
<dbReference type="GO" id="GO:0004588">
    <property type="term" value="F:orotate phosphoribosyltransferase activity"/>
    <property type="evidence" value="ECO:0007669"/>
    <property type="project" value="UniProtKB-UniRule"/>
</dbReference>
<dbReference type="GO" id="GO:0044205">
    <property type="term" value="P:'de novo' UMP biosynthetic process"/>
    <property type="evidence" value="ECO:0007669"/>
    <property type="project" value="UniProtKB-UniRule"/>
</dbReference>
<dbReference type="GO" id="GO:0019856">
    <property type="term" value="P:pyrimidine nucleobase biosynthetic process"/>
    <property type="evidence" value="ECO:0007669"/>
    <property type="project" value="TreeGrafter"/>
</dbReference>
<dbReference type="CDD" id="cd06223">
    <property type="entry name" value="PRTases_typeI"/>
    <property type="match status" value="1"/>
</dbReference>
<dbReference type="Gene3D" id="3.40.50.2020">
    <property type="match status" value="1"/>
</dbReference>
<dbReference type="HAMAP" id="MF_01208">
    <property type="entry name" value="PyrE"/>
    <property type="match status" value="1"/>
</dbReference>
<dbReference type="InterPro" id="IPR023031">
    <property type="entry name" value="OPRT"/>
</dbReference>
<dbReference type="InterPro" id="IPR004467">
    <property type="entry name" value="Or_phspho_trans_dom"/>
</dbReference>
<dbReference type="InterPro" id="IPR000836">
    <property type="entry name" value="PRibTrfase_dom"/>
</dbReference>
<dbReference type="InterPro" id="IPR029057">
    <property type="entry name" value="PRTase-like"/>
</dbReference>
<dbReference type="NCBIfam" id="TIGR00336">
    <property type="entry name" value="pyrE"/>
    <property type="match status" value="1"/>
</dbReference>
<dbReference type="PANTHER" id="PTHR19278">
    <property type="entry name" value="OROTATE PHOSPHORIBOSYLTRANSFERASE"/>
    <property type="match status" value="1"/>
</dbReference>
<dbReference type="PANTHER" id="PTHR19278:SF9">
    <property type="entry name" value="URIDINE 5'-MONOPHOSPHATE SYNTHASE"/>
    <property type="match status" value="1"/>
</dbReference>
<dbReference type="Pfam" id="PF00156">
    <property type="entry name" value="Pribosyltran"/>
    <property type="match status" value="1"/>
</dbReference>
<dbReference type="SUPFAM" id="SSF53271">
    <property type="entry name" value="PRTase-like"/>
    <property type="match status" value="1"/>
</dbReference>
<dbReference type="PROSITE" id="PS00103">
    <property type="entry name" value="PUR_PYR_PR_TRANSFER"/>
    <property type="match status" value="1"/>
</dbReference>
<gene>
    <name evidence="1" type="primary">pyrE</name>
    <name type="ordered locus">BcerKBAB4_3709</name>
</gene>
<name>PYRE_BACMK</name>
<keyword id="KW-0328">Glycosyltransferase</keyword>
<keyword id="KW-0460">Magnesium</keyword>
<keyword id="KW-0665">Pyrimidine biosynthesis</keyword>
<keyword id="KW-0808">Transferase</keyword>
<comment type="function">
    <text evidence="1">Catalyzes the transfer of a ribosyl phosphate group from 5-phosphoribose 1-diphosphate to orotate, leading to the formation of orotidine monophosphate (OMP).</text>
</comment>
<comment type="catalytic activity">
    <reaction evidence="1">
        <text>orotidine 5'-phosphate + diphosphate = orotate + 5-phospho-alpha-D-ribose 1-diphosphate</text>
        <dbReference type="Rhea" id="RHEA:10380"/>
        <dbReference type="ChEBI" id="CHEBI:30839"/>
        <dbReference type="ChEBI" id="CHEBI:33019"/>
        <dbReference type="ChEBI" id="CHEBI:57538"/>
        <dbReference type="ChEBI" id="CHEBI:58017"/>
        <dbReference type="EC" id="2.4.2.10"/>
    </reaction>
</comment>
<comment type="cofactor">
    <cofactor evidence="1">
        <name>Mg(2+)</name>
        <dbReference type="ChEBI" id="CHEBI:18420"/>
    </cofactor>
</comment>
<comment type="pathway">
    <text evidence="1">Pyrimidine metabolism; UMP biosynthesis via de novo pathway; UMP from orotate: step 1/2.</text>
</comment>
<comment type="subunit">
    <text evidence="1">Homodimer.</text>
</comment>
<comment type="similarity">
    <text evidence="1">Belongs to the purine/pyrimidine phosphoribosyltransferase family. PyrE subfamily.</text>
</comment>
<sequence>MKKEIASHLLEIGAVFLQPNDPFTWSSGIKSPIYCDNRLTLSYPKVRQAIAAGLEELIKEHFSTVEVIAGTATAGIAHAAWVSDRMDLPMCYVRSKAKGHGKGNQIEGKAEKGQKVVVVEDLISTGGSAITCVEALREAGCEVLGIVSIFTYELESGKEKLEAANVASYSLSDYSALTEVAAEKGMIGQAETKKLQEWRKNPANEAWITA</sequence>
<evidence type="ECO:0000255" key="1">
    <source>
        <dbReference type="HAMAP-Rule" id="MF_01208"/>
    </source>
</evidence>
<reference key="1">
    <citation type="journal article" date="2008" name="Chem. Biol. Interact.">
        <title>Extending the Bacillus cereus group genomics to putative food-borne pathogens of different toxicity.</title>
        <authorList>
            <person name="Lapidus A."/>
            <person name="Goltsman E."/>
            <person name="Auger S."/>
            <person name="Galleron N."/>
            <person name="Segurens B."/>
            <person name="Dossat C."/>
            <person name="Land M.L."/>
            <person name="Broussolle V."/>
            <person name="Brillard J."/>
            <person name="Guinebretiere M.-H."/>
            <person name="Sanchis V."/>
            <person name="Nguen-the C."/>
            <person name="Lereclus D."/>
            <person name="Richardson P."/>
            <person name="Wincker P."/>
            <person name="Weissenbach J."/>
            <person name="Ehrlich S.D."/>
            <person name="Sorokin A."/>
        </authorList>
    </citation>
    <scope>NUCLEOTIDE SEQUENCE [LARGE SCALE GENOMIC DNA]</scope>
    <source>
        <strain>KBAB4</strain>
    </source>
</reference>
<feature type="chain" id="PRO_1000138763" description="Orotate phosphoribosyltransferase">
    <location>
        <begin position="1"/>
        <end position="210"/>
    </location>
</feature>
<feature type="binding site" evidence="1">
    <location>
        <position position="94"/>
    </location>
    <ligand>
        <name>5-phospho-alpha-D-ribose 1-diphosphate</name>
        <dbReference type="ChEBI" id="CHEBI:58017"/>
        <note>ligand shared between dimeric partners</note>
    </ligand>
</feature>
<feature type="binding site" evidence="1">
    <location>
        <position position="98"/>
    </location>
    <ligand>
        <name>5-phospho-alpha-D-ribose 1-diphosphate</name>
        <dbReference type="ChEBI" id="CHEBI:58017"/>
        <note>ligand shared between dimeric partners</note>
    </ligand>
</feature>
<feature type="binding site" evidence="1">
    <location>
        <position position="100"/>
    </location>
    <ligand>
        <name>5-phospho-alpha-D-ribose 1-diphosphate</name>
        <dbReference type="ChEBI" id="CHEBI:58017"/>
        <note>ligand shared between dimeric partners</note>
    </ligand>
</feature>
<feature type="binding site" description="in other chain" evidence="1">
    <location>
        <begin position="120"/>
        <end position="128"/>
    </location>
    <ligand>
        <name>5-phospho-alpha-D-ribose 1-diphosphate</name>
        <dbReference type="ChEBI" id="CHEBI:58017"/>
        <note>ligand shared between dimeric partners</note>
    </ligand>
</feature>
<feature type="binding site" evidence="1">
    <location>
        <position position="124"/>
    </location>
    <ligand>
        <name>orotate</name>
        <dbReference type="ChEBI" id="CHEBI:30839"/>
    </ligand>
</feature>
<proteinExistence type="inferred from homology"/>
<accession>A9VTC2</accession>
<organism>
    <name type="scientific">Bacillus mycoides (strain KBAB4)</name>
    <name type="common">Bacillus weihenstephanensis</name>
    <dbReference type="NCBI Taxonomy" id="315730"/>
    <lineage>
        <taxon>Bacteria</taxon>
        <taxon>Bacillati</taxon>
        <taxon>Bacillota</taxon>
        <taxon>Bacilli</taxon>
        <taxon>Bacillales</taxon>
        <taxon>Bacillaceae</taxon>
        <taxon>Bacillus</taxon>
        <taxon>Bacillus cereus group</taxon>
    </lineage>
</organism>